<accession>C1CC14</accession>
<reference key="1">
    <citation type="journal article" date="2010" name="Genome Biol.">
        <title>Structure and dynamics of the pan-genome of Streptococcus pneumoniae and closely related species.</title>
        <authorList>
            <person name="Donati C."/>
            <person name="Hiller N.L."/>
            <person name="Tettelin H."/>
            <person name="Muzzi A."/>
            <person name="Croucher N.J."/>
            <person name="Angiuoli S.V."/>
            <person name="Oggioni M."/>
            <person name="Dunning Hotopp J.C."/>
            <person name="Hu F.Z."/>
            <person name="Riley D.R."/>
            <person name="Covacci A."/>
            <person name="Mitchell T.J."/>
            <person name="Bentley S.D."/>
            <person name="Kilian M."/>
            <person name="Ehrlich G.D."/>
            <person name="Rappuoli R."/>
            <person name="Moxon E.R."/>
            <person name="Masignani V."/>
        </authorList>
    </citation>
    <scope>NUCLEOTIDE SEQUENCE [LARGE SCALE GENOMIC DNA]</scope>
    <source>
        <strain>JJA</strain>
    </source>
</reference>
<protein>
    <recommendedName>
        <fullName evidence="1">Large ribosomal subunit protein uL29</fullName>
    </recommendedName>
    <alternativeName>
        <fullName evidence="2">50S ribosomal protein L29</fullName>
    </alternativeName>
</protein>
<name>RL29_STRZJ</name>
<proteinExistence type="inferred from homology"/>
<sequence>MKLNEVKEFVKELRGLSQEELAKRENELKKELFELRFQAATGQLEQTARLKEVKKQIARIKTVQSEAK</sequence>
<keyword id="KW-0687">Ribonucleoprotein</keyword>
<keyword id="KW-0689">Ribosomal protein</keyword>
<dbReference type="EMBL" id="CP000919">
    <property type="protein sequence ID" value="ACO18101.1"/>
    <property type="molecule type" value="Genomic_DNA"/>
</dbReference>
<dbReference type="RefSeq" id="WP_000772918.1">
    <property type="nucleotide sequence ID" value="NC_012466.1"/>
</dbReference>
<dbReference type="SMR" id="C1CC14"/>
<dbReference type="GeneID" id="93738965"/>
<dbReference type="KEGG" id="sjj:SPJ_0227"/>
<dbReference type="HOGENOM" id="CLU_158491_5_2_9"/>
<dbReference type="Proteomes" id="UP000002206">
    <property type="component" value="Chromosome"/>
</dbReference>
<dbReference type="GO" id="GO:0022625">
    <property type="term" value="C:cytosolic large ribosomal subunit"/>
    <property type="evidence" value="ECO:0007669"/>
    <property type="project" value="TreeGrafter"/>
</dbReference>
<dbReference type="GO" id="GO:0003735">
    <property type="term" value="F:structural constituent of ribosome"/>
    <property type="evidence" value="ECO:0007669"/>
    <property type="project" value="InterPro"/>
</dbReference>
<dbReference type="GO" id="GO:0006412">
    <property type="term" value="P:translation"/>
    <property type="evidence" value="ECO:0007669"/>
    <property type="project" value="UniProtKB-UniRule"/>
</dbReference>
<dbReference type="CDD" id="cd00427">
    <property type="entry name" value="Ribosomal_L29_HIP"/>
    <property type="match status" value="1"/>
</dbReference>
<dbReference type="FunFam" id="1.10.287.310:FF:000001">
    <property type="entry name" value="50S ribosomal protein L29"/>
    <property type="match status" value="1"/>
</dbReference>
<dbReference type="Gene3D" id="1.10.287.310">
    <property type="match status" value="1"/>
</dbReference>
<dbReference type="HAMAP" id="MF_00374">
    <property type="entry name" value="Ribosomal_uL29"/>
    <property type="match status" value="1"/>
</dbReference>
<dbReference type="InterPro" id="IPR050063">
    <property type="entry name" value="Ribosomal_protein_uL29"/>
</dbReference>
<dbReference type="InterPro" id="IPR001854">
    <property type="entry name" value="Ribosomal_uL29"/>
</dbReference>
<dbReference type="InterPro" id="IPR018254">
    <property type="entry name" value="Ribosomal_uL29_CS"/>
</dbReference>
<dbReference type="InterPro" id="IPR036049">
    <property type="entry name" value="Ribosomal_uL29_sf"/>
</dbReference>
<dbReference type="NCBIfam" id="TIGR00012">
    <property type="entry name" value="L29"/>
    <property type="match status" value="1"/>
</dbReference>
<dbReference type="PANTHER" id="PTHR10916">
    <property type="entry name" value="60S RIBOSOMAL PROTEIN L35/50S RIBOSOMAL PROTEIN L29"/>
    <property type="match status" value="1"/>
</dbReference>
<dbReference type="PANTHER" id="PTHR10916:SF0">
    <property type="entry name" value="LARGE RIBOSOMAL SUBUNIT PROTEIN UL29C"/>
    <property type="match status" value="1"/>
</dbReference>
<dbReference type="Pfam" id="PF00831">
    <property type="entry name" value="Ribosomal_L29"/>
    <property type="match status" value="1"/>
</dbReference>
<dbReference type="SUPFAM" id="SSF46561">
    <property type="entry name" value="Ribosomal protein L29 (L29p)"/>
    <property type="match status" value="1"/>
</dbReference>
<dbReference type="PROSITE" id="PS00579">
    <property type="entry name" value="RIBOSOMAL_L29"/>
    <property type="match status" value="1"/>
</dbReference>
<feature type="chain" id="PRO_1000194036" description="Large ribosomal subunit protein uL29">
    <location>
        <begin position="1"/>
        <end position="68"/>
    </location>
</feature>
<comment type="similarity">
    <text evidence="1">Belongs to the universal ribosomal protein uL29 family.</text>
</comment>
<evidence type="ECO:0000255" key="1">
    <source>
        <dbReference type="HAMAP-Rule" id="MF_00374"/>
    </source>
</evidence>
<evidence type="ECO:0000305" key="2"/>
<organism>
    <name type="scientific">Streptococcus pneumoniae (strain JJA)</name>
    <dbReference type="NCBI Taxonomy" id="488222"/>
    <lineage>
        <taxon>Bacteria</taxon>
        <taxon>Bacillati</taxon>
        <taxon>Bacillota</taxon>
        <taxon>Bacilli</taxon>
        <taxon>Lactobacillales</taxon>
        <taxon>Streptococcaceae</taxon>
        <taxon>Streptococcus</taxon>
    </lineage>
</organism>
<gene>
    <name evidence="1" type="primary">rpmC</name>
    <name type="ordered locus">SPJ_0227</name>
</gene>